<gene>
    <name type="primary">captC</name>
    <name type="synonym">DG1056</name>
    <name type="synonym">lipB</name>
    <name type="ORF">DDB_G0276763</name>
</gene>
<evidence type="ECO:0000255" key="1"/>
<evidence type="ECO:0000305" key="2"/>
<dbReference type="EMBL" id="AF019108">
    <property type="protein sequence ID" value="AAB70818.1"/>
    <property type="molecule type" value="Genomic_DNA"/>
</dbReference>
<dbReference type="EMBL" id="AAFI02000019">
    <property type="protein sequence ID" value="EAL68883.2"/>
    <property type="molecule type" value="Genomic_DNA"/>
</dbReference>
<dbReference type="RefSeq" id="XP_642821.2">
    <property type="nucleotide sequence ID" value="XM_637729.2"/>
</dbReference>
<dbReference type="SMR" id="Q550W1"/>
<dbReference type="FunCoup" id="Q550W1">
    <property type="interactions" value="139"/>
</dbReference>
<dbReference type="STRING" id="44689.Q550W1"/>
<dbReference type="PaxDb" id="44689-DDB0191335"/>
<dbReference type="EnsemblProtists" id="EAL68883">
    <property type="protein sequence ID" value="EAL68883"/>
    <property type="gene ID" value="DDB_G0276763"/>
</dbReference>
<dbReference type="GeneID" id="8620684"/>
<dbReference type="KEGG" id="ddi:DDB_G0276763"/>
<dbReference type="dictyBase" id="DDB_G0276763">
    <property type="gene designation" value="captC"/>
</dbReference>
<dbReference type="VEuPathDB" id="AmoebaDB:DDB_G0276763"/>
<dbReference type="eggNOG" id="KOG2877">
    <property type="taxonomic scope" value="Eukaryota"/>
</dbReference>
<dbReference type="HOGENOM" id="CLU_035066_0_1_1"/>
<dbReference type="InParanoid" id="Q550W1"/>
<dbReference type="OMA" id="QNMGQGW"/>
<dbReference type="PhylomeDB" id="Q550W1"/>
<dbReference type="Reactome" id="R-DDI-1483191">
    <property type="pathway name" value="Synthesis of PC"/>
</dbReference>
<dbReference type="Reactome" id="R-DDI-1483213">
    <property type="pathway name" value="Synthesis of PE"/>
</dbReference>
<dbReference type="PRO" id="PR:Q550W1"/>
<dbReference type="Proteomes" id="UP000002195">
    <property type="component" value="Chromosome 2"/>
</dbReference>
<dbReference type="GO" id="GO:0016020">
    <property type="term" value="C:membrane"/>
    <property type="evidence" value="ECO:0007669"/>
    <property type="project" value="UniProtKB-SubCell"/>
</dbReference>
<dbReference type="GO" id="GO:0016780">
    <property type="term" value="F:phosphotransferase activity, for other substituted phosphate groups"/>
    <property type="evidence" value="ECO:0007669"/>
    <property type="project" value="InterPro"/>
</dbReference>
<dbReference type="GO" id="GO:0008654">
    <property type="term" value="P:phospholipid biosynthetic process"/>
    <property type="evidence" value="ECO:0007669"/>
    <property type="project" value="InterPro"/>
</dbReference>
<dbReference type="FunFam" id="1.20.120.1760:FF:000056">
    <property type="match status" value="1"/>
</dbReference>
<dbReference type="Gene3D" id="1.20.120.1760">
    <property type="match status" value="1"/>
</dbReference>
<dbReference type="InterPro" id="IPR000462">
    <property type="entry name" value="CDP-OH_P_trans"/>
</dbReference>
<dbReference type="InterPro" id="IPR043130">
    <property type="entry name" value="CDP-OH_PTrfase_TM_dom"/>
</dbReference>
<dbReference type="InterPro" id="IPR048254">
    <property type="entry name" value="CDP_ALCOHOL_P_TRANSF_CS"/>
</dbReference>
<dbReference type="InterPro" id="IPR014472">
    <property type="entry name" value="CHOPT"/>
</dbReference>
<dbReference type="PANTHER" id="PTHR10414:SF37">
    <property type="entry name" value="BB IN A BOXCAR, ISOFORM C"/>
    <property type="match status" value="1"/>
</dbReference>
<dbReference type="PANTHER" id="PTHR10414">
    <property type="entry name" value="ETHANOLAMINEPHOSPHOTRANSFERASE"/>
    <property type="match status" value="1"/>
</dbReference>
<dbReference type="Pfam" id="PF01066">
    <property type="entry name" value="CDP-OH_P_transf"/>
    <property type="match status" value="1"/>
</dbReference>
<dbReference type="PIRSF" id="PIRSF015665">
    <property type="entry name" value="CHOPT"/>
    <property type="match status" value="1"/>
</dbReference>
<dbReference type="PROSITE" id="PS00379">
    <property type="entry name" value="CDP_ALCOHOL_P_TRANSF"/>
    <property type="match status" value="1"/>
</dbReference>
<accession>Q550W1</accession>
<accession>O15734</accession>
<comment type="subcellular location">
    <subcellularLocation>
        <location evidence="2">Membrane</location>
        <topology evidence="2">Multi-pass membrane protein</topology>
    </subcellularLocation>
</comment>
<comment type="similarity">
    <text evidence="2">Belongs to the CDP-alcohol phosphatidyltransferase class-I family.</text>
</comment>
<name>CAPTC_DICDI</name>
<organism>
    <name type="scientific">Dictyostelium discoideum</name>
    <name type="common">Social amoeba</name>
    <dbReference type="NCBI Taxonomy" id="44689"/>
    <lineage>
        <taxon>Eukaryota</taxon>
        <taxon>Amoebozoa</taxon>
        <taxon>Evosea</taxon>
        <taxon>Eumycetozoa</taxon>
        <taxon>Dictyostelia</taxon>
        <taxon>Dictyosteliales</taxon>
        <taxon>Dictyosteliaceae</taxon>
        <taxon>Dictyostelium</taxon>
    </lineage>
</organism>
<proteinExistence type="evidence at transcript level"/>
<keyword id="KW-0472">Membrane</keyword>
<keyword id="KW-1185">Reference proteome</keyword>
<keyword id="KW-0808">Transferase</keyword>
<keyword id="KW-0812">Transmembrane</keyword>
<keyword id="KW-1133">Transmembrane helix</keyword>
<feature type="chain" id="PRO_0000342199" description="Uncharacterized CDP-alcohol phosphatidyltransferase class-I family protein 3">
    <location>
        <begin position="1"/>
        <end position="399"/>
    </location>
</feature>
<feature type="transmembrane region" description="Helical" evidence="1">
    <location>
        <begin position="46"/>
        <end position="66"/>
    </location>
</feature>
<feature type="transmembrane region" description="Helical" evidence="1">
    <location>
        <begin position="76"/>
        <end position="95"/>
    </location>
</feature>
<feature type="transmembrane region" description="Helical" evidence="1">
    <location>
        <begin position="139"/>
        <end position="159"/>
    </location>
</feature>
<feature type="transmembrane region" description="Helical" evidence="1">
    <location>
        <begin position="181"/>
        <end position="201"/>
    </location>
</feature>
<feature type="transmembrane region" description="Helical" evidence="1">
    <location>
        <begin position="226"/>
        <end position="246"/>
    </location>
</feature>
<feature type="transmembrane region" description="Helical" evidence="1">
    <location>
        <begin position="262"/>
        <end position="282"/>
    </location>
</feature>
<feature type="transmembrane region" description="Helical" evidence="1">
    <location>
        <begin position="303"/>
        <end position="323"/>
    </location>
</feature>
<feature type="transmembrane region" description="Helical" evidence="1">
    <location>
        <begin position="330"/>
        <end position="350"/>
    </location>
</feature>
<feature type="transmembrane region" description="Helical" evidence="1">
    <location>
        <begin position="352"/>
        <end position="372"/>
    </location>
</feature>
<feature type="sequence conflict" description="In Ref. 1; AAB70818." evidence="2" ref="1">
    <original>Y</original>
    <variation>N</variation>
    <location>
        <position position="49"/>
    </location>
</feature>
<reference key="1">
    <citation type="submission" date="1997-08" db="EMBL/GenBank/DDBJ databases">
        <authorList>
            <person name="Loomis W.F."/>
            <person name="Iranfar N."/>
        </authorList>
    </citation>
    <scope>NUCLEOTIDE SEQUENCE [MRNA]</scope>
    <source>
        <strain>AX4</strain>
    </source>
</reference>
<reference key="2">
    <citation type="journal article" date="2002" name="Nature">
        <title>Sequence and analysis of chromosome 2 of Dictyostelium discoideum.</title>
        <authorList>
            <person name="Gloeckner G."/>
            <person name="Eichinger L."/>
            <person name="Szafranski K."/>
            <person name="Pachebat J.A."/>
            <person name="Bankier A.T."/>
            <person name="Dear P.H."/>
            <person name="Lehmann R."/>
            <person name="Baumgart C."/>
            <person name="Parra G."/>
            <person name="Abril J.F."/>
            <person name="Guigo R."/>
            <person name="Kumpf K."/>
            <person name="Tunggal B."/>
            <person name="Cox E.C."/>
            <person name="Quail M.A."/>
            <person name="Platzer M."/>
            <person name="Rosenthal A."/>
            <person name="Noegel A.A."/>
        </authorList>
    </citation>
    <scope>NUCLEOTIDE SEQUENCE [LARGE SCALE GENOMIC DNA]</scope>
    <source>
        <strain>AX4</strain>
    </source>
</reference>
<reference key="3">
    <citation type="journal article" date="2005" name="Nature">
        <title>The genome of the social amoeba Dictyostelium discoideum.</title>
        <authorList>
            <person name="Eichinger L."/>
            <person name="Pachebat J.A."/>
            <person name="Gloeckner G."/>
            <person name="Rajandream M.A."/>
            <person name="Sucgang R."/>
            <person name="Berriman M."/>
            <person name="Song J."/>
            <person name="Olsen R."/>
            <person name="Szafranski K."/>
            <person name="Xu Q."/>
            <person name="Tunggal B."/>
            <person name="Kummerfeld S."/>
            <person name="Madera M."/>
            <person name="Konfortov B.A."/>
            <person name="Rivero F."/>
            <person name="Bankier A.T."/>
            <person name="Lehmann R."/>
            <person name="Hamlin N."/>
            <person name="Davies R."/>
            <person name="Gaudet P."/>
            <person name="Fey P."/>
            <person name="Pilcher K."/>
            <person name="Chen G."/>
            <person name="Saunders D."/>
            <person name="Sodergren E.J."/>
            <person name="Davis P."/>
            <person name="Kerhornou A."/>
            <person name="Nie X."/>
            <person name="Hall N."/>
            <person name="Anjard C."/>
            <person name="Hemphill L."/>
            <person name="Bason N."/>
            <person name="Farbrother P."/>
            <person name="Desany B."/>
            <person name="Just E."/>
            <person name="Morio T."/>
            <person name="Rost R."/>
            <person name="Churcher C.M."/>
            <person name="Cooper J."/>
            <person name="Haydock S."/>
            <person name="van Driessche N."/>
            <person name="Cronin A."/>
            <person name="Goodhead I."/>
            <person name="Muzny D.M."/>
            <person name="Mourier T."/>
            <person name="Pain A."/>
            <person name="Lu M."/>
            <person name="Harper D."/>
            <person name="Lindsay R."/>
            <person name="Hauser H."/>
            <person name="James K.D."/>
            <person name="Quiles M."/>
            <person name="Madan Babu M."/>
            <person name="Saito T."/>
            <person name="Buchrieser C."/>
            <person name="Wardroper A."/>
            <person name="Felder M."/>
            <person name="Thangavelu M."/>
            <person name="Johnson D."/>
            <person name="Knights A."/>
            <person name="Loulseged H."/>
            <person name="Mungall K.L."/>
            <person name="Oliver K."/>
            <person name="Price C."/>
            <person name="Quail M.A."/>
            <person name="Urushihara H."/>
            <person name="Hernandez J."/>
            <person name="Rabbinowitsch E."/>
            <person name="Steffen D."/>
            <person name="Sanders M."/>
            <person name="Ma J."/>
            <person name="Kohara Y."/>
            <person name="Sharp S."/>
            <person name="Simmonds M.N."/>
            <person name="Spiegler S."/>
            <person name="Tivey A."/>
            <person name="Sugano S."/>
            <person name="White B."/>
            <person name="Walker D."/>
            <person name="Woodward J.R."/>
            <person name="Winckler T."/>
            <person name="Tanaka Y."/>
            <person name="Shaulsky G."/>
            <person name="Schleicher M."/>
            <person name="Weinstock G.M."/>
            <person name="Rosenthal A."/>
            <person name="Cox E.C."/>
            <person name="Chisholm R.L."/>
            <person name="Gibbs R.A."/>
            <person name="Loomis W.F."/>
            <person name="Platzer M."/>
            <person name="Kay R.R."/>
            <person name="Williams J.G."/>
            <person name="Dear P.H."/>
            <person name="Noegel A.A."/>
            <person name="Barrell B.G."/>
            <person name="Kuspa A."/>
        </authorList>
    </citation>
    <scope>NUCLEOTIDE SEQUENCE [LARGE SCALE GENOMIC DNA]</scope>
    <source>
        <strain>AX4</strain>
    </source>
</reference>
<protein>
    <recommendedName>
        <fullName>Uncharacterized CDP-alcohol phosphatidyltransferase class-I family protein 3</fullName>
    </recommendedName>
    <alternativeName>
        <fullName>Developmental gene 1056 protein</fullName>
    </alternativeName>
</protein>
<sequence length="399" mass="45059">MNVVLSKSALENVSKHKYSGIDDSILAKLILQKYWNFCLKFVPLNIAPYLITLTGTITILLSFFIVGYYSPYLEGTLPRWVYAMSGLTLFFYQTMDNLDGKQARRTGSSSPLGQLFDHGCDSIVCTLQSLIVASVANYGVGYISLIQLFITALLPFWMATWEEYHTGVLHLGPINGPDEGIIIIVCALLSTAIFGNAFWTFKPFVASSQLLPSIIQQWLPTFIQQLMLNEIIVASLSLPCLITCFFNIKNVVQHLQAKQKPILPALKHILVWVIITVSSFIWYYTSTNLLPLSSIWFNNIRTVQFSIGIIFGELVSRLILAHMCHEKYNIIQAPLYPLILSTFCSTINYFNGTIIIPENLLLILFTVTSFVHYSLFVKSTISQLCSYLNIKCFTITKKH</sequence>